<name>AATB_THEGJ</name>
<evidence type="ECO:0000255" key="1">
    <source>
        <dbReference type="HAMAP-Rule" id="MF_00310"/>
    </source>
</evidence>
<sequence>MPGMEYSTVSKIYGPLMIVEGVKGVAYGEVVEIETESGEKRKGQVLEARENLAIVQVFEGTRDLDIKTTRVRFTGETLKVPVSMDMLGRIFNGIGKPIDGGPEIIPEDRRDVHGAPLNPVARAYPRDFIQTGISAIDGMNTLVRGQKLPIFSGSGLPHNMLAAQIARQAKVLGEEEQFAVVFAAMGITYEEANFFKKSFEETGAIERAVLFLNLADDPAIERIITPRMALTVAEYLAFDYDMQVLVILTDMTNYAEALREISAAREEVPGRRGYPGYMYTDLATIYERAGRVRGKKGSITQMPILTMPDDDITHPIPDLTGYITEGQIVLSRELHRKGIYPPIDVLPSLSRLMKDGIGKGRTREDHPQLSQQLYAAYAEGRSLRDLVAVVGEEALSETDRKYLKFADRFEREFVAQRYDEDRSIFETLDLGWELLAELPESELKRVRKEYILKYHPKYRKRGS</sequence>
<comment type="function">
    <text evidence="1">Component of the A-type ATP synthase that produces ATP from ADP in the presence of a proton gradient across the membrane. The B chain is a regulatory subunit.</text>
</comment>
<comment type="subunit">
    <text evidence="1">Has multiple subunits with at least A(3), B(3), C, D, E, F, H, I and proteolipid K(x).</text>
</comment>
<comment type="subcellular location">
    <subcellularLocation>
        <location evidence="1">Cell membrane</location>
        <topology evidence="1">Peripheral membrane protein</topology>
    </subcellularLocation>
</comment>
<comment type="similarity">
    <text evidence="1">Belongs to the ATPase alpha/beta chains family.</text>
</comment>
<protein>
    <recommendedName>
        <fullName evidence="1">A-type ATP synthase subunit B</fullName>
    </recommendedName>
</protein>
<dbReference type="EMBL" id="CP001398">
    <property type="protein sequence ID" value="ACS32649.1"/>
    <property type="molecule type" value="Genomic_DNA"/>
</dbReference>
<dbReference type="RefSeq" id="WP_015857769.1">
    <property type="nucleotide sequence ID" value="NC_012804.1"/>
</dbReference>
<dbReference type="SMR" id="C5A337"/>
<dbReference type="STRING" id="593117.TGAM_0147"/>
<dbReference type="PaxDb" id="593117-TGAM_0147"/>
<dbReference type="GeneID" id="7988727"/>
<dbReference type="KEGG" id="tga:TGAM_0147"/>
<dbReference type="PATRIC" id="fig|593117.10.peg.150"/>
<dbReference type="eggNOG" id="arCOG00865">
    <property type="taxonomic scope" value="Archaea"/>
</dbReference>
<dbReference type="HOGENOM" id="CLU_022916_0_0_2"/>
<dbReference type="OrthoDB" id="32941at2157"/>
<dbReference type="Proteomes" id="UP000001488">
    <property type="component" value="Chromosome"/>
</dbReference>
<dbReference type="GO" id="GO:0005886">
    <property type="term" value="C:plasma membrane"/>
    <property type="evidence" value="ECO:0007669"/>
    <property type="project" value="UniProtKB-SubCell"/>
</dbReference>
<dbReference type="GO" id="GO:0033178">
    <property type="term" value="C:proton-transporting two-sector ATPase complex, catalytic domain"/>
    <property type="evidence" value="ECO:0007669"/>
    <property type="project" value="InterPro"/>
</dbReference>
<dbReference type="GO" id="GO:0005524">
    <property type="term" value="F:ATP binding"/>
    <property type="evidence" value="ECO:0007669"/>
    <property type="project" value="UniProtKB-UniRule"/>
</dbReference>
<dbReference type="GO" id="GO:0046933">
    <property type="term" value="F:proton-transporting ATP synthase activity, rotational mechanism"/>
    <property type="evidence" value="ECO:0007669"/>
    <property type="project" value="UniProtKB-UniRule"/>
</dbReference>
<dbReference type="GO" id="GO:0042777">
    <property type="term" value="P:proton motive force-driven plasma membrane ATP synthesis"/>
    <property type="evidence" value="ECO:0007669"/>
    <property type="project" value="UniProtKB-UniRule"/>
</dbReference>
<dbReference type="CDD" id="cd18112">
    <property type="entry name" value="ATP-synt_V_A-type_beta_C"/>
    <property type="match status" value="1"/>
</dbReference>
<dbReference type="CDD" id="cd18118">
    <property type="entry name" value="ATP-synt_V_A-type_beta_N"/>
    <property type="match status" value="1"/>
</dbReference>
<dbReference type="CDD" id="cd01135">
    <property type="entry name" value="V_A-ATPase_B"/>
    <property type="match status" value="1"/>
</dbReference>
<dbReference type="Gene3D" id="3.40.50.12240">
    <property type="match status" value="1"/>
</dbReference>
<dbReference type="HAMAP" id="MF_00310">
    <property type="entry name" value="ATP_synth_B_arch"/>
    <property type="match status" value="1"/>
</dbReference>
<dbReference type="InterPro" id="IPR055190">
    <property type="entry name" value="ATP-synt_VA_C"/>
</dbReference>
<dbReference type="InterPro" id="IPR020003">
    <property type="entry name" value="ATPase_a/bsu_AS"/>
</dbReference>
<dbReference type="InterPro" id="IPR005724">
    <property type="entry name" value="ATPase_A1-cplx_bsu"/>
</dbReference>
<dbReference type="InterPro" id="IPR004100">
    <property type="entry name" value="ATPase_F1/V1/A1_a/bsu_N"/>
</dbReference>
<dbReference type="InterPro" id="IPR000194">
    <property type="entry name" value="ATPase_F1/V1/A1_a/bsu_nucl-bd"/>
</dbReference>
<dbReference type="InterPro" id="IPR027417">
    <property type="entry name" value="P-loop_NTPase"/>
</dbReference>
<dbReference type="InterPro" id="IPR022879">
    <property type="entry name" value="V-ATPase_su_B/beta"/>
</dbReference>
<dbReference type="NCBIfam" id="TIGR01041">
    <property type="entry name" value="ATP_syn_B_arch"/>
    <property type="match status" value="1"/>
</dbReference>
<dbReference type="NCBIfam" id="NF003235">
    <property type="entry name" value="PRK04196.1"/>
    <property type="match status" value="1"/>
</dbReference>
<dbReference type="PANTHER" id="PTHR43389">
    <property type="entry name" value="V-TYPE PROTON ATPASE SUBUNIT B"/>
    <property type="match status" value="1"/>
</dbReference>
<dbReference type="PANTHER" id="PTHR43389:SF4">
    <property type="entry name" value="V-TYPE PROTON ATPASE SUBUNIT B"/>
    <property type="match status" value="1"/>
</dbReference>
<dbReference type="Pfam" id="PF00006">
    <property type="entry name" value="ATP-synt_ab"/>
    <property type="match status" value="1"/>
</dbReference>
<dbReference type="Pfam" id="PF02874">
    <property type="entry name" value="ATP-synt_ab_N"/>
    <property type="match status" value="1"/>
</dbReference>
<dbReference type="Pfam" id="PF22919">
    <property type="entry name" value="ATP-synt_VA_C"/>
    <property type="match status" value="1"/>
</dbReference>
<dbReference type="PIRSF" id="PIRSF039114">
    <property type="entry name" value="V-ATPsynth_beta/V-ATPase_B"/>
    <property type="match status" value="1"/>
</dbReference>
<dbReference type="SUPFAM" id="SSF47917">
    <property type="entry name" value="C-terminal domain of alpha and beta subunits of F1 ATP synthase"/>
    <property type="match status" value="1"/>
</dbReference>
<dbReference type="SUPFAM" id="SSF52540">
    <property type="entry name" value="P-loop containing nucleoside triphosphate hydrolases"/>
    <property type="match status" value="1"/>
</dbReference>
<dbReference type="PROSITE" id="PS00152">
    <property type="entry name" value="ATPASE_ALPHA_BETA"/>
    <property type="match status" value="1"/>
</dbReference>
<proteinExistence type="inferred from homology"/>
<accession>C5A337</accession>
<organism>
    <name type="scientific">Thermococcus gammatolerans (strain DSM 15229 / JCM 11827 / EJ3)</name>
    <dbReference type="NCBI Taxonomy" id="593117"/>
    <lineage>
        <taxon>Archaea</taxon>
        <taxon>Methanobacteriati</taxon>
        <taxon>Methanobacteriota</taxon>
        <taxon>Thermococci</taxon>
        <taxon>Thermococcales</taxon>
        <taxon>Thermococcaceae</taxon>
        <taxon>Thermococcus</taxon>
    </lineage>
</organism>
<feature type="chain" id="PRO_1000205048" description="A-type ATP synthase subunit B">
    <location>
        <begin position="1"/>
        <end position="463"/>
    </location>
</feature>
<gene>
    <name evidence="1" type="primary">atpB</name>
    <name type="ordered locus">TGAM_0147</name>
</gene>
<keyword id="KW-0066">ATP synthesis</keyword>
<keyword id="KW-1003">Cell membrane</keyword>
<keyword id="KW-0375">Hydrogen ion transport</keyword>
<keyword id="KW-0406">Ion transport</keyword>
<keyword id="KW-0472">Membrane</keyword>
<keyword id="KW-1185">Reference proteome</keyword>
<keyword id="KW-0813">Transport</keyword>
<reference key="1">
    <citation type="journal article" date="2007" name="Genome Biol.">
        <title>Genome analysis and genome-wide proteomics of Thermococcus gammatolerans, the most radioresistant organism known amongst the Archaea.</title>
        <authorList>
            <person name="Zivanovic Y."/>
            <person name="Armengaud J."/>
            <person name="Lagorce A."/>
            <person name="Leplat C."/>
            <person name="Guerin P."/>
            <person name="Dutertre M."/>
            <person name="Anthouard V."/>
            <person name="Forterre P."/>
            <person name="Wincker P."/>
            <person name="Confalonieri F."/>
        </authorList>
    </citation>
    <scope>NUCLEOTIDE SEQUENCE [LARGE SCALE GENOMIC DNA]</scope>
    <source>
        <strain>DSM 15229 / JCM 11827 / EJ3</strain>
    </source>
</reference>